<evidence type="ECO:0000255" key="1">
    <source>
        <dbReference type="HAMAP-Rule" id="MF_01346"/>
    </source>
</evidence>
<feature type="chain" id="PRO_0000238361" description="ATP synthase subunit alpha">
    <location>
        <begin position="1"/>
        <end position="501"/>
    </location>
</feature>
<feature type="binding site" evidence="1">
    <location>
        <begin position="169"/>
        <end position="176"/>
    </location>
    <ligand>
        <name>ATP</name>
        <dbReference type="ChEBI" id="CHEBI:30616"/>
    </ligand>
</feature>
<feature type="site" description="Required for activity" evidence="1">
    <location>
        <position position="362"/>
    </location>
</feature>
<proteinExistence type="inferred from homology"/>
<name>ATPA_STRA1</name>
<protein>
    <recommendedName>
        <fullName evidence="1">ATP synthase subunit alpha</fullName>
        <ecNumber evidence="1">7.1.2.2</ecNumber>
    </recommendedName>
    <alternativeName>
        <fullName evidence="1">ATP synthase F1 sector subunit alpha</fullName>
    </alternativeName>
    <alternativeName>
        <fullName evidence="1">F-ATPase subunit alpha</fullName>
    </alternativeName>
</protein>
<keyword id="KW-0066">ATP synthesis</keyword>
<keyword id="KW-0067">ATP-binding</keyword>
<keyword id="KW-1003">Cell membrane</keyword>
<keyword id="KW-0139">CF(1)</keyword>
<keyword id="KW-0375">Hydrogen ion transport</keyword>
<keyword id="KW-0406">Ion transport</keyword>
<keyword id="KW-0472">Membrane</keyword>
<keyword id="KW-0547">Nucleotide-binding</keyword>
<keyword id="KW-1278">Translocase</keyword>
<keyword id="KW-0813">Transport</keyword>
<organism>
    <name type="scientific">Streptococcus agalactiae serotype Ia (strain ATCC 27591 / A909 / CDC SS700)</name>
    <dbReference type="NCBI Taxonomy" id="205921"/>
    <lineage>
        <taxon>Bacteria</taxon>
        <taxon>Bacillati</taxon>
        <taxon>Bacillota</taxon>
        <taxon>Bacilli</taxon>
        <taxon>Lactobacillales</taxon>
        <taxon>Streptococcaceae</taxon>
        <taxon>Streptococcus</taxon>
    </lineage>
</organism>
<reference key="1">
    <citation type="journal article" date="2005" name="Proc. Natl. Acad. Sci. U.S.A.">
        <title>Genome analysis of multiple pathogenic isolates of Streptococcus agalactiae: implications for the microbial 'pan-genome'.</title>
        <authorList>
            <person name="Tettelin H."/>
            <person name="Masignani V."/>
            <person name="Cieslewicz M.J."/>
            <person name="Donati C."/>
            <person name="Medini D."/>
            <person name="Ward N.L."/>
            <person name="Angiuoli S.V."/>
            <person name="Crabtree J."/>
            <person name="Jones A.L."/>
            <person name="Durkin A.S."/>
            <person name="DeBoy R.T."/>
            <person name="Davidsen T.M."/>
            <person name="Mora M."/>
            <person name="Scarselli M."/>
            <person name="Margarit y Ros I."/>
            <person name="Peterson J.D."/>
            <person name="Hauser C.R."/>
            <person name="Sundaram J.P."/>
            <person name="Nelson W.C."/>
            <person name="Madupu R."/>
            <person name="Brinkac L.M."/>
            <person name="Dodson R.J."/>
            <person name="Rosovitz M.J."/>
            <person name="Sullivan S.A."/>
            <person name="Daugherty S.C."/>
            <person name="Haft D.H."/>
            <person name="Selengut J."/>
            <person name="Gwinn M.L."/>
            <person name="Zhou L."/>
            <person name="Zafar N."/>
            <person name="Khouri H."/>
            <person name="Radune D."/>
            <person name="Dimitrov G."/>
            <person name="Watkins K."/>
            <person name="O'Connor K.J."/>
            <person name="Smith S."/>
            <person name="Utterback T.R."/>
            <person name="White O."/>
            <person name="Rubens C.E."/>
            <person name="Grandi G."/>
            <person name="Madoff L.C."/>
            <person name="Kasper D.L."/>
            <person name="Telford J.L."/>
            <person name="Wessels M.R."/>
            <person name="Rappuoli R."/>
            <person name="Fraser C.M."/>
        </authorList>
    </citation>
    <scope>NUCLEOTIDE SEQUENCE [LARGE SCALE GENOMIC DNA]</scope>
    <source>
        <strain>ATCC 27591 / A909 / CDC SS700</strain>
    </source>
</reference>
<accession>Q3K1J7</accession>
<gene>
    <name evidence="1" type="primary">atpA</name>
    <name type="ordered locus">SAK_0984</name>
</gene>
<dbReference type="EC" id="7.1.2.2" evidence="1"/>
<dbReference type="EMBL" id="CP000114">
    <property type="protein sequence ID" value="ABA44763.1"/>
    <property type="molecule type" value="Genomic_DNA"/>
</dbReference>
<dbReference type="RefSeq" id="WP_000996613.1">
    <property type="nucleotide sequence ID" value="NC_007432.1"/>
</dbReference>
<dbReference type="SMR" id="Q3K1J7"/>
<dbReference type="GeneID" id="66885811"/>
<dbReference type="KEGG" id="sak:SAK_0984"/>
<dbReference type="HOGENOM" id="CLU_010091_2_1_9"/>
<dbReference type="GO" id="GO:0005886">
    <property type="term" value="C:plasma membrane"/>
    <property type="evidence" value="ECO:0007669"/>
    <property type="project" value="UniProtKB-SubCell"/>
</dbReference>
<dbReference type="GO" id="GO:0045259">
    <property type="term" value="C:proton-transporting ATP synthase complex"/>
    <property type="evidence" value="ECO:0007669"/>
    <property type="project" value="UniProtKB-KW"/>
</dbReference>
<dbReference type="GO" id="GO:0043531">
    <property type="term" value="F:ADP binding"/>
    <property type="evidence" value="ECO:0007669"/>
    <property type="project" value="TreeGrafter"/>
</dbReference>
<dbReference type="GO" id="GO:0005524">
    <property type="term" value="F:ATP binding"/>
    <property type="evidence" value="ECO:0007669"/>
    <property type="project" value="UniProtKB-UniRule"/>
</dbReference>
<dbReference type="GO" id="GO:0046933">
    <property type="term" value="F:proton-transporting ATP synthase activity, rotational mechanism"/>
    <property type="evidence" value="ECO:0007669"/>
    <property type="project" value="UniProtKB-UniRule"/>
</dbReference>
<dbReference type="CDD" id="cd18113">
    <property type="entry name" value="ATP-synt_F1_alpha_C"/>
    <property type="match status" value="1"/>
</dbReference>
<dbReference type="CDD" id="cd18116">
    <property type="entry name" value="ATP-synt_F1_alpha_N"/>
    <property type="match status" value="1"/>
</dbReference>
<dbReference type="CDD" id="cd01132">
    <property type="entry name" value="F1-ATPase_alpha_CD"/>
    <property type="match status" value="1"/>
</dbReference>
<dbReference type="FunFam" id="1.20.150.20:FF:000001">
    <property type="entry name" value="ATP synthase subunit alpha"/>
    <property type="match status" value="1"/>
</dbReference>
<dbReference type="FunFam" id="2.40.30.20:FF:000001">
    <property type="entry name" value="ATP synthase subunit alpha"/>
    <property type="match status" value="1"/>
</dbReference>
<dbReference type="FunFam" id="3.40.50.300:FF:000002">
    <property type="entry name" value="ATP synthase subunit alpha"/>
    <property type="match status" value="1"/>
</dbReference>
<dbReference type="Gene3D" id="2.40.30.20">
    <property type="match status" value="1"/>
</dbReference>
<dbReference type="Gene3D" id="1.20.150.20">
    <property type="entry name" value="ATP synthase alpha/beta chain, C-terminal domain"/>
    <property type="match status" value="1"/>
</dbReference>
<dbReference type="Gene3D" id="3.40.50.300">
    <property type="entry name" value="P-loop containing nucleotide triphosphate hydrolases"/>
    <property type="match status" value="1"/>
</dbReference>
<dbReference type="HAMAP" id="MF_01346">
    <property type="entry name" value="ATP_synth_alpha_bact"/>
    <property type="match status" value="1"/>
</dbReference>
<dbReference type="InterPro" id="IPR023366">
    <property type="entry name" value="ATP_synth_asu-like_sf"/>
</dbReference>
<dbReference type="InterPro" id="IPR000793">
    <property type="entry name" value="ATP_synth_asu_C"/>
</dbReference>
<dbReference type="InterPro" id="IPR038376">
    <property type="entry name" value="ATP_synth_asu_C_sf"/>
</dbReference>
<dbReference type="InterPro" id="IPR033732">
    <property type="entry name" value="ATP_synth_F1_a_nt-bd_dom"/>
</dbReference>
<dbReference type="InterPro" id="IPR005294">
    <property type="entry name" value="ATP_synth_F1_asu"/>
</dbReference>
<dbReference type="InterPro" id="IPR004100">
    <property type="entry name" value="ATPase_F1/V1/A1_a/bsu_N"/>
</dbReference>
<dbReference type="InterPro" id="IPR036121">
    <property type="entry name" value="ATPase_F1/V1/A1_a/bsu_N_sf"/>
</dbReference>
<dbReference type="InterPro" id="IPR000194">
    <property type="entry name" value="ATPase_F1/V1/A1_a/bsu_nucl-bd"/>
</dbReference>
<dbReference type="InterPro" id="IPR027417">
    <property type="entry name" value="P-loop_NTPase"/>
</dbReference>
<dbReference type="NCBIfam" id="TIGR00962">
    <property type="entry name" value="atpA"/>
    <property type="match status" value="1"/>
</dbReference>
<dbReference type="NCBIfam" id="NF009884">
    <property type="entry name" value="PRK13343.1"/>
    <property type="match status" value="1"/>
</dbReference>
<dbReference type="PANTHER" id="PTHR48082">
    <property type="entry name" value="ATP SYNTHASE SUBUNIT ALPHA, MITOCHONDRIAL"/>
    <property type="match status" value="1"/>
</dbReference>
<dbReference type="PANTHER" id="PTHR48082:SF2">
    <property type="entry name" value="ATP SYNTHASE SUBUNIT ALPHA, MITOCHONDRIAL"/>
    <property type="match status" value="1"/>
</dbReference>
<dbReference type="Pfam" id="PF00006">
    <property type="entry name" value="ATP-synt_ab"/>
    <property type="match status" value="1"/>
</dbReference>
<dbReference type="Pfam" id="PF00306">
    <property type="entry name" value="ATP-synt_ab_C"/>
    <property type="match status" value="1"/>
</dbReference>
<dbReference type="Pfam" id="PF02874">
    <property type="entry name" value="ATP-synt_ab_N"/>
    <property type="match status" value="1"/>
</dbReference>
<dbReference type="PIRSF" id="PIRSF039088">
    <property type="entry name" value="F_ATPase_subunit_alpha"/>
    <property type="match status" value="1"/>
</dbReference>
<dbReference type="SUPFAM" id="SSF47917">
    <property type="entry name" value="C-terminal domain of alpha and beta subunits of F1 ATP synthase"/>
    <property type="match status" value="1"/>
</dbReference>
<dbReference type="SUPFAM" id="SSF50615">
    <property type="entry name" value="N-terminal domain of alpha and beta subunits of F1 ATP synthase"/>
    <property type="match status" value="1"/>
</dbReference>
<dbReference type="SUPFAM" id="SSF52540">
    <property type="entry name" value="P-loop containing nucleoside triphosphate hydrolases"/>
    <property type="match status" value="1"/>
</dbReference>
<comment type="function">
    <text evidence="1">Produces ATP from ADP in the presence of a proton gradient across the membrane. The alpha chain is a regulatory subunit.</text>
</comment>
<comment type="catalytic activity">
    <reaction evidence="1">
        <text>ATP + H2O + 4 H(+)(in) = ADP + phosphate + 5 H(+)(out)</text>
        <dbReference type="Rhea" id="RHEA:57720"/>
        <dbReference type="ChEBI" id="CHEBI:15377"/>
        <dbReference type="ChEBI" id="CHEBI:15378"/>
        <dbReference type="ChEBI" id="CHEBI:30616"/>
        <dbReference type="ChEBI" id="CHEBI:43474"/>
        <dbReference type="ChEBI" id="CHEBI:456216"/>
        <dbReference type="EC" id="7.1.2.2"/>
    </reaction>
</comment>
<comment type="subunit">
    <text evidence="1">F-type ATPases have 2 components, CF(1) - the catalytic core - and CF(0) - the membrane proton channel. CF(1) has five subunits: alpha(3), beta(3), gamma(1), delta(1), epsilon(1). CF(0) has three main subunits: a(1), b(2) and c(9-12). The alpha and beta chains form an alternating ring which encloses part of the gamma chain. CF(1) is attached to CF(0) by a central stalk formed by the gamma and epsilon chains, while a peripheral stalk is formed by the delta and b chains.</text>
</comment>
<comment type="subcellular location">
    <subcellularLocation>
        <location evidence="1">Cell membrane</location>
        <topology evidence="1">Peripheral membrane protein</topology>
    </subcellularLocation>
</comment>
<comment type="similarity">
    <text evidence="1">Belongs to the ATPase alpha/beta chains family.</text>
</comment>
<sequence>MAINAQEISALIKKQIEDFQPNFDVTETGIVTYIGDGIARARGLDNAMSGELLEFSNGAYGMAQNLESNDVGIIILGDFSEIREGDVVKRTGKIMEVPVGEAMIGRVVNPLGQPVDGLGEIETTATRPVETPAPGVMQRKSVFEPLQTGLKAIDALVPIGRGQRELIIGDRQTGKTSVAIDAILNQKGQDMICIYVAIGQKESTVRTQVETLRKYGALDYTIVVTASASQPSPLLFIAPYAGVAMAEEFMYNGKHVLIVYDDLSKQAVAYRELSLLLRRPPGREAYPGDVFYLHSRLLERSAKVSDALGGGSITALPFIETQAGDISAYIATNVISITDGQIFLQENLFNSGIRPAIDAGSSVSRVGGAAQIKAMKRVAGTLRLDLASYRELEAFTQFGSDLDAATQAKLNRGRRTVEVLKQPLHKPLPVEKQVVILYALTHGFLDDVPVNDILAFEEALYDYFDAHYDNLFETIRTTKDLPEEAELDAAIQAFKDQSQFK</sequence>